<proteinExistence type="evidence at protein level"/>
<evidence type="ECO:0000255" key="1"/>
<evidence type="ECO:0000269" key="2">
    <source>
    </source>
</evidence>
<evidence type="ECO:0000269" key="3">
    <source>
    </source>
</evidence>
<evidence type="ECO:0000269" key="4">
    <source>
    </source>
</evidence>
<evidence type="ECO:0000269" key="5">
    <source>
    </source>
</evidence>
<evidence type="ECO:0000269" key="6">
    <source>
    </source>
</evidence>
<evidence type="ECO:0000303" key="7">
    <source>
    </source>
</evidence>
<evidence type="ECO:0000305" key="8"/>
<evidence type="ECO:0000305" key="9">
    <source>
    </source>
</evidence>
<evidence type="ECO:0000305" key="10">
    <source>
    </source>
</evidence>
<evidence type="ECO:0007829" key="11">
    <source>
        <dbReference type="PDB" id="3C6G"/>
    </source>
</evidence>
<evidence type="ECO:0007829" key="12">
    <source>
        <dbReference type="PDB" id="3CZH"/>
    </source>
</evidence>
<feature type="signal peptide" evidence="1">
    <location>
        <begin position="1"/>
        <end position="26"/>
    </location>
</feature>
<feature type="chain" id="PRO_0000051778" description="Vitamin D 25-hydroxylase" evidence="1">
    <location>
        <begin position="27"/>
        <end position="501"/>
    </location>
</feature>
<feature type="binding site" evidence="5">
    <location>
        <position position="250"/>
    </location>
    <ligand>
        <name>substrate</name>
    </ligand>
</feature>
<feature type="binding site" description="axial binding residue" evidence="5">
    <location>
        <position position="448"/>
    </location>
    <ligand>
        <name>heme</name>
        <dbReference type="ChEBI" id="CHEBI:30413"/>
    </ligand>
    <ligandPart>
        <name>Fe</name>
        <dbReference type="ChEBI" id="CHEBI:18248"/>
    </ligandPart>
</feature>
<feature type="sequence variant" id="VAR_021534" description="In VDDR1B; complete loss of activity; dbSNP:rs61495246." evidence="3 6">
    <original>L</original>
    <variation>P</variation>
    <location>
        <position position="99"/>
    </location>
</feature>
<feature type="sequence variant" id="VAR_075532" description="Reduces 25-hydroxylase activity." evidence="6">
    <original>K</original>
    <variation>N</variation>
    <location>
        <position position="242"/>
    </location>
</feature>
<feature type="turn" evidence="12">
    <location>
        <begin position="47"/>
        <end position="49"/>
    </location>
</feature>
<feature type="helix" evidence="12">
    <location>
        <begin position="52"/>
        <end position="57"/>
    </location>
</feature>
<feature type="helix" evidence="12">
    <location>
        <begin position="62"/>
        <end position="73"/>
    </location>
</feature>
<feature type="strand" evidence="12">
    <location>
        <begin position="75"/>
        <end position="81"/>
    </location>
</feature>
<feature type="strand" evidence="12">
    <location>
        <begin position="84"/>
        <end position="91"/>
    </location>
</feature>
<feature type="helix" evidence="12">
    <location>
        <begin position="92"/>
        <end position="99"/>
    </location>
</feature>
<feature type="turn" evidence="12">
    <location>
        <begin position="100"/>
        <end position="106"/>
    </location>
</feature>
<feature type="helix" evidence="12">
    <location>
        <begin position="113"/>
        <end position="119"/>
    </location>
</feature>
<feature type="helix" evidence="12">
    <location>
        <begin position="131"/>
        <end position="146"/>
    </location>
</feature>
<feature type="turn" evidence="12">
    <location>
        <begin position="147"/>
        <end position="150"/>
    </location>
</feature>
<feature type="helix" evidence="12">
    <location>
        <begin position="154"/>
        <end position="170"/>
    </location>
</feature>
<feature type="turn" evidence="12">
    <location>
        <begin position="171"/>
        <end position="174"/>
    </location>
</feature>
<feature type="helix" evidence="12">
    <location>
        <begin position="180"/>
        <end position="196"/>
    </location>
</feature>
<feature type="helix" evidence="12">
    <location>
        <begin position="205"/>
        <end position="220"/>
    </location>
</feature>
<feature type="helix" evidence="12">
    <location>
        <begin position="224"/>
        <end position="231"/>
    </location>
</feature>
<feature type="helix" evidence="12">
    <location>
        <begin position="233"/>
        <end position="237"/>
    </location>
</feature>
<feature type="strand" evidence="12">
    <location>
        <begin position="239"/>
        <end position="241"/>
    </location>
</feature>
<feature type="helix" evidence="12">
    <location>
        <begin position="242"/>
        <end position="265"/>
    </location>
</feature>
<feature type="helix" evidence="12">
    <location>
        <begin position="276"/>
        <end position="286"/>
    </location>
</feature>
<feature type="turn" evidence="12">
    <location>
        <begin position="287"/>
        <end position="289"/>
    </location>
</feature>
<feature type="helix" evidence="12">
    <location>
        <begin position="297"/>
        <end position="328"/>
    </location>
</feature>
<feature type="helix" evidence="12">
    <location>
        <begin position="330"/>
        <end position="343"/>
    </location>
</feature>
<feature type="strand" evidence="12">
    <location>
        <begin position="346"/>
        <end position="348"/>
    </location>
</feature>
<feature type="helix" evidence="12">
    <location>
        <begin position="352"/>
        <end position="357"/>
    </location>
</feature>
<feature type="helix" evidence="12">
    <location>
        <begin position="359"/>
        <end position="372"/>
    </location>
</feature>
<feature type="strand" evidence="12">
    <location>
        <begin position="387"/>
        <end position="389"/>
    </location>
</feature>
<feature type="strand" evidence="12">
    <location>
        <begin position="392"/>
        <end position="394"/>
    </location>
</feature>
<feature type="strand" evidence="12">
    <location>
        <begin position="399"/>
        <end position="403"/>
    </location>
</feature>
<feature type="helix" evidence="12">
    <location>
        <begin position="404"/>
        <end position="408"/>
    </location>
</feature>
<feature type="turn" evidence="12">
    <location>
        <begin position="411"/>
        <end position="413"/>
    </location>
</feature>
<feature type="strand" evidence="11">
    <location>
        <begin position="414"/>
        <end position="416"/>
    </location>
</feature>
<feature type="helix" evidence="12">
    <location>
        <begin position="422"/>
        <end position="425"/>
    </location>
</feature>
<feature type="helix" evidence="12">
    <location>
        <begin position="451"/>
        <end position="468"/>
    </location>
</feature>
<feature type="strand" evidence="12">
    <location>
        <begin position="469"/>
        <end position="472"/>
    </location>
</feature>
<feature type="helix" evidence="12">
    <location>
        <begin position="474"/>
        <end position="476"/>
    </location>
</feature>
<feature type="strand" evidence="12">
    <location>
        <begin position="485"/>
        <end position="488"/>
    </location>
</feature>
<feature type="strand" evidence="12">
    <location>
        <begin position="496"/>
        <end position="500"/>
    </location>
</feature>
<comment type="function">
    <text evidence="2 4 5">A cytochrome P450 monooxygenase involved in activation of vitamin D precursors. Catalyzes hydroxylation at C-25 of both forms of vitamin D, vitamin D(2) and D(3) (calciol) (PubMed:12867411, PubMed:15465040, PubMed:18511070). Can metabolize vitamin D analogs/prodrugs 1alpha-hydroxyvitamin D(2) (doxercalciferol) and 1alpha-hydroxyvitamin D(3) (alfacalcidol) forming 25-hydroxy derivatives (PubMed:15465040, PubMed:18511070). Mechanistically, uses molecular oxygen inserting one oxygen atom into a substrate, and reducing the second into a water molecule, with two electrons provided by NADPH via cytochrome P450 reductase (CPR; NADPH-ferrihemoprotein reductase) (PubMed:12867411, PubMed:15465040, PubMed:18511070).</text>
</comment>
<comment type="catalytic activity">
    <reaction evidence="2 4 5">
        <text>calciol + reduced [NADPH--hemoprotein reductase] + O2 = calcidiol + oxidized [NADPH--hemoprotein reductase] + H2O + H(+)</text>
        <dbReference type="Rhea" id="RHEA:32903"/>
        <dbReference type="Rhea" id="RHEA-COMP:11964"/>
        <dbReference type="Rhea" id="RHEA-COMP:11965"/>
        <dbReference type="ChEBI" id="CHEBI:15377"/>
        <dbReference type="ChEBI" id="CHEBI:15378"/>
        <dbReference type="ChEBI" id="CHEBI:15379"/>
        <dbReference type="ChEBI" id="CHEBI:17933"/>
        <dbReference type="ChEBI" id="CHEBI:28940"/>
        <dbReference type="ChEBI" id="CHEBI:57618"/>
        <dbReference type="ChEBI" id="CHEBI:58210"/>
        <dbReference type="EC" id="1.14.14.24"/>
    </reaction>
    <physiologicalReaction direction="left-to-right" evidence="9">
        <dbReference type="Rhea" id="RHEA:32904"/>
    </physiologicalReaction>
</comment>
<comment type="catalytic activity">
    <reaction evidence="4 5">
        <text>vitamin D2 + reduced [NADPH--hemoprotein reductase] + O2 = 25-hydroxyvitamin D2 + oxidized [NADPH--hemoprotein reductase] + H2O + H(+)</text>
        <dbReference type="Rhea" id="RHEA:46580"/>
        <dbReference type="Rhea" id="RHEA-COMP:11964"/>
        <dbReference type="Rhea" id="RHEA-COMP:11965"/>
        <dbReference type="ChEBI" id="CHEBI:15377"/>
        <dbReference type="ChEBI" id="CHEBI:15378"/>
        <dbReference type="ChEBI" id="CHEBI:15379"/>
        <dbReference type="ChEBI" id="CHEBI:28934"/>
        <dbReference type="ChEBI" id="CHEBI:57618"/>
        <dbReference type="ChEBI" id="CHEBI:58210"/>
        <dbReference type="ChEBI" id="CHEBI:86319"/>
    </reaction>
    <physiologicalReaction direction="left-to-right" evidence="9">
        <dbReference type="Rhea" id="RHEA:46581"/>
    </physiologicalReaction>
</comment>
<comment type="catalytic activity">
    <reaction evidence="4 5">
        <text>1alpha-hydroxyvitamin D2 + reduced [NADPH--hemoprotein reductase] + O2 = 1alpha,25-dihydroxyvitamin D2 + oxidized [NADPH--hemoprotein reductase] + H2O + H(+)</text>
        <dbReference type="Rhea" id="RHEA:46584"/>
        <dbReference type="Rhea" id="RHEA-COMP:11964"/>
        <dbReference type="Rhea" id="RHEA-COMP:11965"/>
        <dbReference type="ChEBI" id="CHEBI:4712"/>
        <dbReference type="ChEBI" id="CHEBI:15377"/>
        <dbReference type="ChEBI" id="CHEBI:15378"/>
        <dbReference type="ChEBI" id="CHEBI:15379"/>
        <dbReference type="ChEBI" id="CHEBI:57618"/>
        <dbReference type="ChEBI" id="CHEBI:58210"/>
        <dbReference type="ChEBI" id="CHEBI:86320"/>
    </reaction>
    <physiologicalReaction direction="left-to-right" evidence="9">
        <dbReference type="Rhea" id="RHEA:46585"/>
    </physiologicalReaction>
</comment>
<comment type="catalytic activity">
    <reaction evidence="4">
        <text>alfacalcidol + reduced [NADPH--hemoprotein reductase] + O2 = calcitriol + oxidized [NADPH--hemoprotein reductase] + H2O + H(+)</text>
        <dbReference type="Rhea" id="RHEA:49272"/>
        <dbReference type="Rhea" id="RHEA-COMP:11964"/>
        <dbReference type="Rhea" id="RHEA-COMP:11965"/>
        <dbReference type="ChEBI" id="CHEBI:15377"/>
        <dbReference type="ChEBI" id="CHEBI:15378"/>
        <dbReference type="ChEBI" id="CHEBI:15379"/>
        <dbReference type="ChEBI" id="CHEBI:17823"/>
        <dbReference type="ChEBI" id="CHEBI:31186"/>
        <dbReference type="ChEBI" id="CHEBI:57618"/>
        <dbReference type="ChEBI" id="CHEBI:58210"/>
    </reaction>
    <physiologicalReaction direction="left-to-right" evidence="9">
        <dbReference type="Rhea" id="RHEA:49273"/>
    </physiologicalReaction>
</comment>
<comment type="cofactor">
    <cofactor evidence="5">
        <name>heme</name>
        <dbReference type="ChEBI" id="CHEBI:30413"/>
    </cofactor>
</comment>
<comment type="biophysicochemical properties">
    <kinetics>
        <KM evidence="4">0.67 uM for vitamin D(2)</KM>
        <KM evidence="4">0.45 uM for vitamin D(3)</KM>
        <KM evidence="5">4.4 uM for vitamin D(3)</KM>
        <KM evidence="5">15.8 uM for 1alpha-hydroxyvitamin D(2)</KM>
        <KM evidence="5">11.3 uM for 1alpha-hydroxyvitamin D(3)</KM>
    </kinetics>
</comment>
<comment type="pathway">
    <text evidence="9 10">Hormone biosynthesis; vitamin D biosynthesis.</text>
</comment>
<comment type="subunit">
    <text evidence="5">Homodimer.</text>
</comment>
<comment type="subcellular location">
    <subcellularLocation>
        <location evidence="9">Endoplasmic reticulum membrane</location>
        <topology>Peripheral membrane protein</topology>
    </subcellularLocation>
    <subcellularLocation>
        <location evidence="9">Microsome membrane</location>
        <topology>Peripheral membrane protein</topology>
    </subcellularLocation>
</comment>
<comment type="disease" evidence="3 6">
    <disease id="DI-00008">
        <name>Rickets vitamin D-dependent 1B</name>
        <acronym>VDDR1B</acronym>
        <description>An autosomal recessive disorder caused by a selective deficiency of the active form of vitamin D (1,25-dihydroxyvitamin D3) and resulting in defective bone mineralization and clinical features of rickets. The patients sera have low calcium concentrations, low phosphate concentrations, elevated alkaline phosphatase activity and low levels of 25-hydroxyvitamin D.</description>
        <dbReference type="MIM" id="600081"/>
    </disease>
    <text>The disease is caused by variants affecting the gene represented in this entry.</text>
</comment>
<comment type="similarity">
    <text evidence="8">Belongs to the cytochrome P450 family.</text>
</comment>
<accession>Q6VVX0</accession>
<accession>Q2M3H3</accession>
<accession>Q5RT65</accession>
<organism>
    <name type="scientific">Homo sapiens</name>
    <name type="common">Human</name>
    <dbReference type="NCBI Taxonomy" id="9606"/>
    <lineage>
        <taxon>Eukaryota</taxon>
        <taxon>Metazoa</taxon>
        <taxon>Chordata</taxon>
        <taxon>Craniata</taxon>
        <taxon>Vertebrata</taxon>
        <taxon>Euteleostomi</taxon>
        <taxon>Mammalia</taxon>
        <taxon>Eutheria</taxon>
        <taxon>Euarchontoglires</taxon>
        <taxon>Primates</taxon>
        <taxon>Haplorrhini</taxon>
        <taxon>Catarrhini</taxon>
        <taxon>Hominidae</taxon>
        <taxon>Homo</taxon>
    </lineage>
</organism>
<dbReference type="EC" id="1.14.14.24" evidence="2 4 5"/>
<dbReference type="EMBL" id="AY323817">
    <property type="protein sequence ID" value="AAQ23114.1"/>
    <property type="molecule type" value="mRNA"/>
</dbReference>
<dbReference type="EMBL" id="BC104907">
    <property type="protein sequence ID" value="AAI04908.1"/>
    <property type="molecule type" value="mRNA"/>
</dbReference>
<dbReference type="EMBL" id="BC104909">
    <property type="protein sequence ID" value="AAI04910.1"/>
    <property type="molecule type" value="mRNA"/>
</dbReference>
<dbReference type="EMBL" id="AY800276">
    <property type="protein sequence ID" value="AAV65814.1"/>
    <property type="molecule type" value="Genomic_DNA"/>
</dbReference>
<dbReference type="CCDS" id="CCDS7818.1"/>
<dbReference type="RefSeq" id="NP_078790.2">
    <property type="nucleotide sequence ID" value="NM_024514.4"/>
</dbReference>
<dbReference type="PDB" id="3C6G">
    <property type="method" value="X-ray"/>
    <property type="resolution" value="2.80 A"/>
    <property type="chains" value="A/B=32-501"/>
</dbReference>
<dbReference type="PDB" id="3CZH">
    <property type="method" value="X-ray"/>
    <property type="resolution" value="2.30 A"/>
    <property type="chains" value="A/B=32-501"/>
</dbReference>
<dbReference type="PDB" id="3DL9">
    <property type="method" value="X-ray"/>
    <property type="resolution" value="2.72 A"/>
    <property type="chains" value="A/B=32-501"/>
</dbReference>
<dbReference type="PDBsum" id="3C6G"/>
<dbReference type="PDBsum" id="3CZH"/>
<dbReference type="PDBsum" id="3DL9"/>
<dbReference type="SMR" id="Q6VVX0"/>
<dbReference type="BioGRID" id="125676">
    <property type="interactions" value="1"/>
</dbReference>
<dbReference type="FunCoup" id="Q6VVX0">
    <property type="interactions" value="745"/>
</dbReference>
<dbReference type="STRING" id="9606.ENSP00000334592"/>
<dbReference type="BindingDB" id="Q6VVX0"/>
<dbReference type="ChEMBL" id="CHEMBL4523986"/>
<dbReference type="DrugBank" id="DB00169">
    <property type="generic name" value="Cholecalciferol"/>
</dbReference>
<dbReference type="DrugBank" id="DB00153">
    <property type="generic name" value="Ergocalciferol"/>
</dbReference>
<dbReference type="DrugBank" id="DB11094">
    <property type="generic name" value="Vitamin D"/>
</dbReference>
<dbReference type="DrugCentral" id="Q6VVX0"/>
<dbReference type="SwissLipids" id="SLP:000001264"/>
<dbReference type="GlyGen" id="Q6VVX0">
    <property type="glycosylation" value="1 site, 1 O-linked glycan (1 site)"/>
</dbReference>
<dbReference type="iPTMnet" id="Q6VVX0"/>
<dbReference type="PhosphoSitePlus" id="Q6VVX0"/>
<dbReference type="BioMuta" id="CYP2R1"/>
<dbReference type="DMDM" id="62286619"/>
<dbReference type="MassIVE" id="Q6VVX0"/>
<dbReference type="PaxDb" id="9606-ENSP00000334592"/>
<dbReference type="PeptideAtlas" id="Q6VVX0"/>
<dbReference type="ProteomicsDB" id="67733"/>
<dbReference type="Antibodypedia" id="24708">
    <property type="antibodies" value="225 antibodies from 28 providers"/>
</dbReference>
<dbReference type="DNASU" id="120227"/>
<dbReference type="Ensembl" id="ENST00000334636.10">
    <property type="protein sequence ID" value="ENSP00000334592.5"/>
    <property type="gene ID" value="ENSG00000186104.11"/>
</dbReference>
<dbReference type="GeneID" id="120227"/>
<dbReference type="KEGG" id="hsa:120227"/>
<dbReference type="MANE-Select" id="ENST00000334636.10">
    <property type="protein sequence ID" value="ENSP00000334592.5"/>
    <property type="RefSeq nucleotide sequence ID" value="NM_024514.5"/>
    <property type="RefSeq protein sequence ID" value="NP_078790.2"/>
</dbReference>
<dbReference type="UCSC" id="uc001mlr.4">
    <property type="organism name" value="human"/>
</dbReference>
<dbReference type="AGR" id="HGNC:20580"/>
<dbReference type="CTD" id="120227"/>
<dbReference type="DisGeNET" id="120227"/>
<dbReference type="GeneCards" id="CYP2R1"/>
<dbReference type="HGNC" id="HGNC:20580">
    <property type="gene designation" value="CYP2R1"/>
</dbReference>
<dbReference type="HPA" id="ENSG00000186104">
    <property type="expression patterns" value="Low tissue specificity"/>
</dbReference>
<dbReference type="MalaCards" id="CYP2R1"/>
<dbReference type="MIM" id="600081">
    <property type="type" value="phenotype"/>
</dbReference>
<dbReference type="MIM" id="608713">
    <property type="type" value="gene"/>
</dbReference>
<dbReference type="neXtProt" id="NX_Q6VVX0"/>
<dbReference type="OpenTargets" id="ENSG00000186104"/>
<dbReference type="Orphanet" id="289157">
    <property type="disease" value="Hypocalcemic vitamin D-dependent rickets"/>
</dbReference>
<dbReference type="PharmGKB" id="PA134986407"/>
<dbReference type="VEuPathDB" id="HostDB:ENSG00000186104"/>
<dbReference type="eggNOG" id="KOG0156">
    <property type="taxonomic scope" value="Eukaryota"/>
</dbReference>
<dbReference type="GeneTree" id="ENSGT00940000158305"/>
<dbReference type="HOGENOM" id="CLU_001570_22_0_1"/>
<dbReference type="InParanoid" id="Q6VVX0"/>
<dbReference type="OMA" id="RQEMYIG"/>
<dbReference type="OrthoDB" id="1055148at2759"/>
<dbReference type="PAN-GO" id="Q6VVX0">
    <property type="GO annotations" value="7 GO annotations based on evolutionary models"/>
</dbReference>
<dbReference type="PhylomeDB" id="Q6VVX0"/>
<dbReference type="TreeFam" id="TF352043"/>
<dbReference type="BioCyc" id="MetaCyc:HS17721-MONOMER"/>
<dbReference type="BRENDA" id="1.14.14.24">
    <property type="organism ID" value="2681"/>
</dbReference>
<dbReference type="PathwayCommons" id="Q6VVX0"/>
<dbReference type="Reactome" id="R-HSA-196791">
    <property type="pathway name" value="Vitamin D (calciferol) metabolism"/>
</dbReference>
<dbReference type="Reactome" id="R-HSA-211916">
    <property type="pathway name" value="Vitamins"/>
</dbReference>
<dbReference type="Reactome" id="R-HSA-5579027">
    <property type="pathway name" value="Defective CYP27B1 causes VDDR1B"/>
</dbReference>
<dbReference type="SABIO-RK" id="Q6VVX0"/>
<dbReference type="SIGNOR" id="Q6VVX0"/>
<dbReference type="UniPathway" id="UPA00954"/>
<dbReference type="BioGRID-ORCS" id="120227">
    <property type="hits" value="13 hits in 1156 CRISPR screens"/>
</dbReference>
<dbReference type="ChiTaRS" id="CYP2R1">
    <property type="organism name" value="human"/>
</dbReference>
<dbReference type="EvolutionaryTrace" id="Q6VVX0"/>
<dbReference type="GeneWiki" id="CYP2R1"/>
<dbReference type="GenomeRNAi" id="120227"/>
<dbReference type="Pharos" id="Q6VVX0">
    <property type="development level" value="Tbio"/>
</dbReference>
<dbReference type="PRO" id="PR:Q6VVX0"/>
<dbReference type="Proteomes" id="UP000005640">
    <property type="component" value="Chromosome 11"/>
</dbReference>
<dbReference type="RNAct" id="Q6VVX0">
    <property type="molecule type" value="protein"/>
</dbReference>
<dbReference type="Bgee" id="ENSG00000186104">
    <property type="expression patterns" value="Expressed in sperm and 166 other cell types or tissues"/>
</dbReference>
<dbReference type="ExpressionAtlas" id="Q6VVX0">
    <property type="expression patterns" value="baseline and differential"/>
</dbReference>
<dbReference type="GO" id="GO:0005737">
    <property type="term" value="C:cytoplasm"/>
    <property type="evidence" value="ECO:0000318"/>
    <property type="project" value="GO_Central"/>
</dbReference>
<dbReference type="GO" id="GO:0005789">
    <property type="term" value="C:endoplasmic reticulum membrane"/>
    <property type="evidence" value="ECO:0000304"/>
    <property type="project" value="Reactome"/>
</dbReference>
<dbReference type="GO" id="GO:0043231">
    <property type="term" value="C:intracellular membrane-bounded organelle"/>
    <property type="evidence" value="ECO:0000318"/>
    <property type="project" value="GO_Central"/>
</dbReference>
<dbReference type="GO" id="GO:1902271">
    <property type="term" value="F:D3 vitamins binding"/>
    <property type="evidence" value="ECO:0000314"/>
    <property type="project" value="UniProtKB"/>
</dbReference>
<dbReference type="GO" id="GO:0020037">
    <property type="term" value="F:heme binding"/>
    <property type="evidence" value="ECO:0000314"/>
    <property type="project" value="UniProtKB"/>
</dbReference>
<dbReference type="GO" id="GO:0005506">
    <property type="term" value="F:iron ion binding"/>
    <property type="evidence" value="ECO:0000314"/>
    <property type="project" value="UniProtKB"/>
</dbReference>
<dbReference type="GO" id="GO:0016712">
    <property type="term" value="F:oxidoreductase activity, acting on paired donors, with incorporation or reduction of molecular oxygen, reduced flavin or flavoprotein as one donor, and incorporation of one atom of oxygen"/>
    <property type="evidence" value="ECO:0000318"/>
    <property type="project" value="GO_Central"/>
</dbReference>
<dbReference type="GO" id="GO:0042803">
    <property type="term" value="F:protein homodimerization activity"/>
    <property type="evidence" value="ECO:0000314"/>
    <property type="project" value="UniProtKB"/>
</dbReference>
<dbReference type="GO" id="GO:0030343">
    <property type="term" value="F:vitamin D3 25-hydroxylase activity"/>
    <property type="evidence" value="ECO:0000314"/>
    <property type="project" value="UniProtKB"/>
</dbReference>
<dbReference type="GO" id="GO:0036378">
    <property type="term" value="P:calcitriol biosynthetic process from calciol"/>
    <property type="evidence" value="ECO:0000314"/>
    <property type="project" value="UniProtKB"/>
</dbReference>
<dbReference type="GO" id="GO:0006082">
    <property type="term" value="P:organic acid metabolic process"/>
    <property type="evidence" value="ECO:0000318"/>
    <property type="project" value="GO_Central"/>
</dbReference>
<dbReference type="GO" id="GO:0010164">
    <property type="term" value="P:response to cesium ion"/>
    <property type="evidence" value="ECO:0007669"/>
    <property type="project" value="Ensembl"/>
</dbReference>
<dbReference type="GO" id="GO:0010212">
    <property type="term" value="P:response to ionizing radiation"/>
    <property type="evidence" value="ECO:0007669"/>
    <property type="project" value="Ensembl"/>
</dbReference>
<dbReference type="GO" id="GO:0042359">
    <property type="term" value="P:vitamin D metabolic process"/>
    <property type="evidence" value="ECO:0000304"/>
    <property type="project" value="Reactome"/>
</dbReference>
<dbReference type="GO" id="GO:0006766">
    <property type="term" value="P:vitamin metabolic process"/>
    <property type="evidence" value="ECO:0000304"/>
    <property type="project" value="Reactome"/>
</dbReference>
<dbReference type="GO" id="GO:0006805">
    <property type="term" value="P:xenobiotic metabolic process"/>
    <property type="evidence" value="ECO:0000318"/>
    <property type="project" value="GO_Central"/>
</dbReference>
<dbReference type="CDD" id="cd20661">
    <property type="entry name" value="CYP2R1"/>
    <property type="match status" value="1"/>
</dbReference>
<dbReference type="FunFam" id="1.10.630.10:FF:000030">
    <property type="entry name" value="vitamin D 25-hydroxylase isoform X1"/>
    <property type="match status" value="1"/>
</dbReference>
<dbReference type="Gene3D" id="1.10.630.10">
    <property type="entry name" value="Cytochrome P450"/>
    <property type="match status" value="1"/>
</dbReference>
<dbReference type="InterPro" id="IPR001128">
    <property type="entry name" value="Cyt_P450"/>
</dbReference>
<dbReference type="InterPro" id="IPR017972">
    <property type="entry name" value="Cyt_P450_CS"/>
</dbReference>
<dbReference type="InterPro" id="IPR002401">
    <property type="entry name" value="Cyt_P450_E_grp-I"/>
</dbReference>
<dbReference type="InterPro" id="IPR036396">
    <property type="entry name" value="Cyt_P450_sf"/>
</dbReference>
<dbReference type="InterPro" id="IPR050182">
    <property type="entry name" value="Cytochrome_P450_fam2"/>
</dbReference>
<dbReference type="PANTHER" id="PTHR24300">
    <property type="entry name" value="CYTOCHROME P450 508A4-RELATED"/>
    <property type="match status" value="1"/>
</dbReference>
<dbReference type="PANTHER" id="PTHR24300:SF48">
    <property type="entry name" value="VITAMIN D 25-HYDROXYLASE"/>
    <property type="match status" value="1"/>
</dbReference>
<dbReference type="Pfam" id="PF00067">
    <property type="entry name" value="p450"/>
    <property type="match status" value="1"/>
</dbReference>
<dbReference type="PRINTS" id="PR00463">
    <property type="entry name" value="EP450I"/>
</dbReference>
<dbReference type="PRINTS" id="PR00385">
    <property type="entry name" value="P450"/>
</dbReference>
<dbReference type="SUPFAM" id="SSF48264">
    <property type="entry name" value="Cytochrome P450"/>
    <property type="match status" value="1"/>
</dbReference>
<dbReference type="PROSITE" id="PS00086">
    <property type="entry name" value="CYTOCHROME_P450"/>
    <property type="match status" value="1"/>
</dbReference>
<reference key="1">
    <citation type="journal article" date="2003" name="J. Biol. Chem.">
        <title>De-orphanization of cytochrome P450 2R1: a microsomal vitamin D 25-hydroxylase.</title>
        <authorList>
            <person name="Cheng J.B."/>
            <person name="Motola D.L."/>
            <person name="Mangelsdorf D.J."/>
            <person name="Russell D.W."/>
        </authorList>
    </citation>
    <scope>NUCLEOTIDE SEQUENCE [MRNA]</scope>
    <scope>FUNCTION</scope>
    <scope>CATALYTIC ACTIVITY</scope>
</reference>
<reference key="2">
    <citation type="journal article" date="2004" name="Biochem. Biophys. Res. Commun.">
        <title>Metabolism of vitamin D by human microsomal CYP2R1.</title>
        <authorList>
            <person name="Shinkyo R."/>
            <person name="Sakaki T."/>
            <person name="Kamakura M."/>
            <person name="Ohta M."/>
            <person name="Inouye K."/>
        </authorList>
    </citation>
    <scope>NUCLEOTIDE SEQUENCE [MRNA]</scope>
    <scope>FUNCTION</scope>
    <scope>CATALYTIC ACTIVITY</scope>
    <scope>BIOPHYSICOCHEMICAL PROPERTIES</scope>
    <scope>PATHWAY</scope>
    <scope>SUBCELLULAR LOCATION</scope>
</reference>
<reference key="3">
    <citation type="journal article" date="2004" name="Genome Res.">
        <title>The status, quality, and expansion of the NIH full-length cDNA project: the Mammalian Gene Collection (MGC).</title>
        <authorList>
            <consortium name="The MGC Project Team"/>
        </authorList>
    </citation>
    <scope>NUCLEOTIDE SEQUENCE [LARGE SCALE MRNA]</scope>
    <source>
        <tissue>Liver</tissue>
    </source>
</reference>
<reference key="4">
    <citation type="submission" date="2004-10" db="EMBL/GenBank/DDBJ databases">
        <title>Human CYP2R1 gene 5'-flanking region.</title>
        <authorList>
            <person name="Tsuruga E."/>
            <person name="Bell N.H."/>
            <person name="Reddy S.V."/>
        </authorList>
    </citation>
    <scope>NUCLEOTIDE SEQUENCE [GENOMIC DNA] OF 1-8</scope>
</reference>
<reference key="5">
    <citation type="journal article" date="2008" name="J. Mol. Biol.">
        <title>Structural analysis of CYP2R1 in complex with vitamin D3.</title>
        <authorList>
            <person name="Strushkevich N."/>
            <person name="Usanov S.A."/>
            <person name="Plotnikov A.N."/>
            <person name="Jones G."/>
            <person name="Park H.-W."/>
        </authorList>
    </citation>
    <scope>X-RAY CRYSTALLOGRAPHY (2.8 ANGSTROMS) OF 32-501 IN COMPLEX WITH VITAMIN D3 AND HEME</scope>
    <scope>FUNCTION</scope>
    <scope>CATALYTIC ACTIVITY</scope>
    <scope>BIOPHYSICOCHEMICAL PROPERTIES</scope>
    <scope>SUBUNIT</scope>
    <scope>PATHWAY</scope>
</reference>
<reference key="6">
    <citation type="submission" date="2009-02" db="PDB data bank">
        <title>Crystal structure of CYP2R1 in complexes with 1-alpha-hydroxy-vitamin D2 and with vitamin D2.</title>
        <authorList>
            <consortium name="Structural genomics consortium (SGC)"/>
        </authorList>
    </citation>
    <scope>X-RAY CRYSTALLOGRAPHY (2.72 ANGSTROMS) OF 32-501 IN COMPLEXES WITH HEME; VITAMIN D2 AND 1-ALPHA-HYDROXY-VITAMIN D2</scope>
</reference>
<reference key="7">
    <citation type="journal article" date="2004" name="Proc. Natl. Acad. Sci. U.S.A.">
        <title>Genetic evidence that the human CYP2R1 enzyme is a key vitamin D 25-hydroxylase.</title>
        <authorList>
            <person name="Cheng J.B."/>
            <person name="Levine M.A."/>
            <person name="Bell N.H."/>
            <person name="Mangelsdorf D.J."/>
            <person name="Russell D.W."/>
        </authorList>
    </citation>
    <scope>VARIANT VDDR1B PRO-99</scope>
</reference>
<reference key="8">
    <citation type="journal article" date="2015" name="J. Clin. Endocrinol. Metab.">
        <title>CYP2R1 mutations impair generation of 25-hydroxyvitamin D and cause an atypical form of vitamin D deficiency.</title>
        <authorList>
            <person name="Thacher T.D."/>
            <person name="Fischer P.R."/>
            <person name="Singh R.J."/>
            <person name="Roizen J."/>
            <person name="Levine M.A."/>
        </authorList>
    </citation>
    <scope>VARIANT VDDR1B PRO-99</scope>
    <scope>VARIANT ASN-242</scope>
    <scope>CHARACTERIZATION OF VARIANT VDDR1B PRO-99</scope>
    <scope>CHARACTERIZATION OF VARIANT ASN-242</scope>
</reference>
<gene>
    <name type="primary">CYP2R1</name>
</gene>
<keyword id="KW-0002">3D-structure</keyword>
<keyword id="KW-0225">Disease variant</keyword>
<keyword id="KW-0256">Endoplasmic reticulum</keyword>
<keyword id="KW-0349">Heme</keyword>
<keyword id="KW-0408">Iron</keyword>
<keyword id="KW-0443">Lipid metabolism</keyword>
<keyword id="KW-0472">Membrane</keyword>
<keyword id="KW-0479">Metal-binding</keyword>
<keyword id="KW-0492">Microsome</keyword>
<keyword id="KW-0503">Monooxygenase</keyword>
<keyword id="KW-0560">Oxidoreductase</keyword>
<keyword id="KW-1267">Proteomics identification</keyword>
<keyword id="KW-1185">Reference proteome</keyword>
<keyword id="KW-0732">Signal</keyword>
<protein>
    <recommendedName>
        <fullName evidence="7">Vitamin D 25-hydroxylase</fullName>
        <ecNumber evidence="2 4 5">1.14.14.24</ecNumber>
    </recommendedName>
    <alternativeName>
        <fullName>Cytochrome P450 2R1</fullName>
    </alternativeName>
</protein>
<name>CP2R1_HUMAN</name>
<sequence length="501" mass="57359">MWKLWRAEEGAAALGGALFLLLFALGVRQLLKQRRPMGFPPGPPGLPFIGNIYSLAASSELPHVYMRKQSQVYGEIFSLDLGGISTVVLNGYDVVKECLVHQSEIFADRPCLPLFMKMTKMGGLLNSRYGRGWVDHRRLAVNSFRYFGYGQKSFESKILEETKFFNDAIETYKGRPFDFKQLITNAVSNITNLIIFGERFTYEDTDFQHMIELFSENVELAASASVFLYNAFPWIGILPFGKHQQLFRNAAVVYDFLSRLIEKASVNRKPQLPQHFVDAYLDEMDQGKNDPSSTFSKENLIFSVGELIIAGTETTTNVLRWAILFMALYPNIQGQVQKEIDLIMGPNGKPSWDDKCKMPYTEAVLHEVLRFCNIVPLGIFHATSEDAVVRGYSIPKGTTVITNLYSVHFDEKYWRDPEVFHPERFLDSSGYFAKKEALVPFSLGRRHCLGEHLARMEMFLFFTALLQRFHLHFPHELVPDLKPRLGMTLQPQPYLICAERR</sequence>